<organism evidence="9">
    <name type="scientific">Danio rerio</name>
    <name type="common">Zebrafish</name>
    <name type="synonym">Brachydanio rerio</name>
    <dbReference type="NCBI Taxonomy" id="7955"/>
    <lineage>
        <taxon>Eukaryota</taxon>
        <taxon>Metazoa</taxon>
        <taxon>Chordata</taxon>
        <taxon>Craniata</taxon>
        <taxon>Vertebrata</taxon>
        <taxon>Euteleostomi</taxon>
        <taxon>Actinopterygii</taxon>
        <taxon>Neopterygii</taxon>
        <taxon>Teleostei</taxon>
        <taxon>Ostariophysi</taxon>
        <taxon>Cypriniformes</taxon>
        <taxon>Danionidae</taxon>
        <taxon>Danioninae</taxon>
        <taxon>Danio</taxon>
    </lineage>
</organism>
<feature type="chain" id="PRO_0000442535" description="Gap junction epsilon-1 protein">
    <location>
        <begin position="1"/>
        <end position="207"/>
    </location>
</feature>
<feature type="topological domain" description="Cytoplasmic" evidence="1">
    <location>
        <begin position="1"/>
        <end position="22"/>
    </location>
</feature>
<feature type="transmembrane region" description="Helical" evidence="4">
    <location>
        <begin position="23"/>
        <end position="43"/>
    </location>
</feature>
<feature type="topological domain" description="Extracellular" evidence="1">
    <location>
        <begin position="44"/>
        <end position="74"/>
    </location>
</feature>
<feature type="transmembrane region" description="Helical" evidence="4">
    <location>
        <begin position="75"/>
        <end position="95"/>
    </location>
</feature>
<feature type="topological domain" description="Cytoplasmic" evidence="1">
    <location>
        <begin position="96"/>
        <end position="111"/>
    </location>
</feature>
<feature type="transmembrane region" description="Helical" evidence="4">
    <location>
        <begin position="112"/>
        <end position="132"/>
    </location>
</feature>
<feature type="topological domain" description="Extracellular" evidence="1">
    <location>
        <begin position="133"/>
        <end position="175"/>
    </location>
</feature>
<feature type="transmembrane region" description="Helical" evidence="4">
    <location>
        <begin position="176"/>
        <end position="196"/>
    </location>
</feature>
<feature type="topological domain" description="Cytoplasmic" evidence="1">
    <location>
        <begin position="197"/>
        <end position="207"/>
    </location>
</feature>
<feature type="disulfide bond" evidence="2">
    <location>
        <begin position="53"/>
        <end position="161"/>
    </location>
</feature>
<feature type="disulfide bond" evidence="2">
    <location>
        <begin position="64"/>
        <end position="147"/>
    </location>
</feature>
<protein>
    <recommendedName>
        <fullName evidence="3">Gap junction epsilon-1 protein</fullName>
    </recommendedName>
    <alternativeName>
        <fullName evidence="6">Connexin-23</fullName>
    </alternativeName>
</protein>
<dbReference type="EMBL" id="BX855623">
    <property type="status" value="NOT_ANNOTATED_CDS"/>
    <property type="molecule type" value="Genomic_DNA"/>
</dbReference>
<dbReference type="EMBL" id="BC091468">
    <property type="protein sequence ID" value="AAH91468.1"/>
    <property type="molecule type" value="mRNA"/>
</dbReference>
<dbReference type="RefSeq" id="NP_001013564.1">
    <property type="nucleotide sequence ID" value="NM_001013546.1"/>
</dbReference>
<dbReference type="SMR" id="U3JA75"/>
<dbReference type="FunCoup" id="U3JA75">
    <property type="interactions" value="916"/>
</dbReference>
<dbReference type="STRING" id="7955.ENSDARP00000127140"/>
<dbReference type="PaxDb" id="7955-ENSDARP00000127140"/>
<dbReference type="Ensembl" id="ENSDART00000153137">
    <property type="protein sequence ID" value="ENSDARP00000127140"/>
    <property type="gene ID" value="ENSDARG00000054150"/>
</dbReference>
<dbReference type="GeneID" id="541419"/>
<dbReference type="KEGG" id="dre:541419"/>
<dbReference type="AGR" id="ZFIN:ZDB-GENE-050320-121"/>
<dbReference type="CTD" id="541419"/>
<dbReference type="ZFIN" id="ZDB-GENE-050320-121">
    <property type="gene designation" value="gje1a"/>
</dbReference>
<dbReference type="eggNOG" id="ENOG502RVMN">
    <property type="taxonomic scope" value="Eukaryota"/>
</dbReference>
<dbReference type="HOGENOM" id="CLU_115891_0_0_1"/>
<dbReference type="InParanoid" id="U3JA75"/>
<dbReference type="OMA" id="WLQIYLF"/>
<dbReference type="OrthoDB" id="8719005at2759"/>
<dbReference type="PhylomeDB" id="U3JA75"/>
<dbReference type="PRO" id="PR:U3JA75"/>
<dbReference type="Proteomes" id="UP000000437">
    <property type="component" value="Chromosome 20"/>
</dbReference>
<dbReference type="Bgee" id="ENSDARG00000054150">
    <property type="expression patterns" value="Expressed in larva and 8 other cell types or tissues"/>
</dbReference>
<dbReference type="ExpressionAtlas" id="U3JA75">
    <property type="expression patterns" value="baseline"/>
</dbReference>
<dbReference type="GO" id="GO:0005922">
    <property type="term" value="C:connexin complex"/>
    <property type="evidence" value="ECO:0000318"/>
    <property type="project" value="GO_Central"/>
</dbReference>
<dbReference type="GO" id="GO:0005243">
    <property type="term" value="F:gap junction channel activity"/>
    <property type="evidence" value="ECO:0000314"/>
    <property type="project" value="ZFIN"/>
</dbReference>
<dbReference type="GO" id="GO:0007267">
    <property type="term" value="P:cell-cell signaling"/>
    <property type="evidence" value="ECO:0000318"/>
    <property type="project" value="GO_Central"/>
</dbReference>
<dbReference type="FunFam" id="1.20.1440.80:FF:000004">
    <property type="entry name" value="Gap junction epsilon-1 protein"/>
    <property type="match status" value="1"/>
</dbReference>
<dbReference type="Gene3D" id="1.20.1440.80">
    <property type="entry name" value="Gap junction channel protein cysteine-rich domain"/>
    <property type="match status" value="1"/>
</dbReference>
<dbReference type="InterPro" id="IPR000500">
    <property type="entry name" value="Connexin"/>
</dbReference>
<dbReference type="InterPro" id="IPR019570">
    <property type="entry name" value="Connexin_CCC"/>
</dbReference>
<dbReference type="InterPro" id="IPR013092">
    <property type="entry name" value="Connexin_N"/>
</dbReference>
<dbReference type="InterPro" id="IPR038359">
    <property type="entry name" value="Connexin_N_sf"/>
</dbReference>
<dbReference type="PANTHER" id="PTHR11984">
    <property type="entry name" value="CONNEXIN"/>
    <property type="match status" value="1"/>
</dbReference>
<dbReference type="PANTHER" id="PTHR11984:SF1">
    <property type="entry name" value="GAP JUNCTION EPSILON-1 PROTEIN-RELATED"/>
    <property type="match status" value="1"/>
</dbReference>
<dbReference type="Pfam" id="PF00029">
    <property type="entry name" value="Connexin"/>
    <property type="match status" value="2"/>
</dbReference>
<dbReference type="PRINTS" id="PR00206">
    <property type="entry name" value="CONNEXIN"/>
</dbReference>
<dbReference type="SMART" id="SM01089">
    <property type="entry name" value="Connexin_CCC"/>
    <property type="match status" value="1"/>
</dbReference>
<reference evidence="9" key="1">
    <citation type="journal article" date="2013" name="Nature">
        <title>The zebrafish reference genome sequence and its relationship to the human genome.</title>
        <authorList>
            <person name="Howe K."/>
            <person name="Clark M.D."/>
            <person name="Torroja C.F."/>
            <person name="Torrance J."/>
            <person name="Berthelot C."/>
            <person name="Muffato M."/>
            <person name="Collins J.E."/>
            <person name="Humphray S."/>
            <person name="McLaren K."/>
            <person name="Matthews L."/>
            <person name="McLaren S."/>
            <person name="Sealy I."/>
            <person name="Caccamo M."/>
            <person name="Churcher C."/>
            <person name="Scott C."/>
            <person name="Barrett J.C."/>
            <person name="Koch R."/>
            <person name="Rauch G.J."/>
            <person name="White S."/>
            <person name="Chow W."/>
            <person name="Kilian B."/>
            <person name="Quintais L.T."/>
            <person name="Guerra-Assuncao J.A."/>
            <person name="Zhou Y."/>
            <person name="Gu Y."/>
            <person name="Yen J."/>
            <person name="Vogel J.H."/>
            <person name="Eyre T."/>
            <person name="Redmond S."/>
            <person name="Banerjee R."/>
            <person name="Chi J."/>
            <person name="Fu B."/>
            <person name="Langley E."/>
            <person name="Maguire S.F."/>
            <person name="Laird G.K."/>
            <person name="Lloyd D."/>
            <person name="Kenyon E."/>
            <person name="Donaldson S."/>
            <person name="Sehra H."/>
            <person name="Almeida-King J."/>
            <person name="Loveland J."/>
            <person name="Trevanion S."/>
            <person name="Jones M."/>
            <person name="Quail M."/>
            <person name="Willey D."/>
            <person name="Hunt A."/>
            <person name="Burton J."/>
            <person name="Sims S."/>
            <person name="McLay K."/>
            <person name="Plumb B."/>
            <person name="Davis J."/>
            <person name="Clee C."/>
            <person name="Oliver K."/>
            <person name="Clark R."/>
            <person name="Riddle C."/>
            <person name="Elliot D."/>
            <person name="Threadgold G."/>
            <person name="Harden G."/>
            <person name="Ware D."/>
            <person name="Begum S."/>
            <person name="Mortimore B."/>
            <person name="Kerry G."/>
            <person name="Heath P."/>
            <person name="Phillimore B."/>
            <person name="Tracey A."/>
            <person name="Corby N."/>
            <person name="Dunn M."/>
            <person name="Johnson C."/>
            <person name="Wood J."/>
            <person name="Clark S."/>
            <person name="Pelan S."/>
            <person name="Griffiths G."/>
            <person name="Smith M."/>
            <person name="Glithero R."/>
            <person name="Howden P."/>
            <person name="Barker N."/>
            <person name="Lloyd C."/>
            <person name="Stevens C."/>
            <person name="Harley J."/>
            <person name="Holt K."/>
            <person name="Panagiotidis G."/>
            <person name="Lovell J."/>
            <person name="Beasley H."/>
            <person name="Henderson C."/>
            <person name="Gordon D."/>
            <person name="Auger K."/>
            <person name="Wright D."/>
            <person name="Collins J."/>
            <person name="Raisen C."/>
            <person name="Dyer L."/>
            <person name="Leung K."/>
            <person name="Robertson L."/>
            <person name="Ambridge K."/>
            <person name="Leongamornlert D."/>
            <person name="McGuire S."/>
            <person name="Gilderthorp R."/>
            <person name="Griffiths C."/>
            <person name="Manthravadi D."/>
            <person name="Nichol S."/>
            <person name="Barker G."/>
            <person name="Whitehead S."/>
            <person name="Kay M."/>
            <person name="Brown J."/>
            <person name="Murnane C."/>
            <person name="Gray E."/>
            <person name="Humphries M."/>
            <person name="Sycamore N."/>
            <person name="Barker D."/>
            <person name="Saunders D."/>
            <person name="Wallis J."/>
            <person name="Babbage A."/>
            <person name="Hammond S."/>
            <person name="Mashreghi-Mohammadi M."/>
            <person name="Barr L."/>
            <person name="Martin S."/>
            <person name="Wray P."/>
            <person name="Ellington A."/>
            <person name="Matthews N."/>
            <person name="Ellwood M."/>
            <person name="Woodmansey R."/>
            <person name="Clark G."/>
            <person name="Cooper J."/>
            <person name="Tromans A."/>
            <person name="Grafham D."/>
            <person name="Skuce C."/>
            <person name="Pandian R."/>
            <person name="Andrews R."/>
            <person name="Harrison E."/>
            <person name="Kimberley A."/>
            <person name="Garnett J."/>
            <person name="Fosker N."/>
            <person name="Hall R."/>
            <person name="Garner P."/>
            <person name="Kelly D."/>
            <person name="Bird C."/>
            <person name="Palmer S."/>
            <person name="Gehring I."/>
            <person name="Berger A."/>
            <person name="Dooley C.M."/>
            <person name="Ersan-Urun Z."/>
            <person name="Eser C."/>
            <person name="Geiger H."/>
            <person name="Geisler M."/>
            <person name="Karotki L."/>
            <person name="Kirn A."/>
            <person name="Konantz J."/>
            <person name="Konantz M."/>
            <person name="Oberlander M."/>
            <person name="Rudolph-Geiger S."/>
            <person name="Teucke M."/>
            <person name="Lanz C."/>
            <person name="Raddatz G."/>
            <person name="Osoegawa K."/>
            <person name="Zhu B."/>
            <person name="Rapp A."/>
            <person name="Widaa S."/>
            <person name="Langford C."/>
            <person name="Yang F."/>
            <person name="Schuster S.C."/>
            <person name="Carter N.P."/>
            <person name="Harrow J."/>
            <person name="Ning Z."/>
            <person name="Herrero J."/>
            <person name="Searle S.M."/>
            <person name="Enright A."/>
            <person name="Geisler R."/>
            <person name="Plasterk R.H."/>
            <person name="Lee C."/>
            <person name="Westerfield M."/>
            <person name="de Jong P.J."/>
            <person name="Zon L.I."/>
            <person name="Postlethwait J.H."/>
            <person name="Nusslein-Volhard C."/>
            <person name="Hubbard T.J."/>
            <person name="Roest Crollius H."/>
            <person name="Rogers J."/>
            <person name="Stemple D.L."/>
        </authorList>
    </citation>
    <scope>NUCLEOTIDE SEQUENCE [LARGE SCALE GENOMIC DNA]</scope>
    <source>
        <strain evidence="9">Tuebingen</strain>
    </source>
</reference>
<reference evidence="8" key="2">
    <citation type="submission" date="2005-03" db="EMBL/GenBank/DDBJ databases">
        <authorList>
            <consortium name="NIH - Zebrafish Gene Collection (ZGC) project"/>
        </authorList>
    </citation>
    <scope>NUCLEOTIDE SEQUENCE [LARGE SCALE MRNA]</scope>
    <source>
        <strain evidence="8">Singapore</strain>
        <tissue evidence="8">Embryo</tissue>
    </source>
</reference>
<reference evidence="7" key="3">
    <citation type="journal article" date="2008" name="FEBS Lett.">
        <title>Cx23, a connexin with only four extracellular-loop cysteines, forms functional gap junction channels and hemichannels.</title>
        <authorList>
            <person name="Iovine M.K."/>
            <person name="Gumpert A.M."/>
            <person name="Falk M.M."/>
            <person name="Mendelson T.C."/>
        </authorList>
    </citation>
    <scope>FUNCTION</scope>
    <scope>SUBCELLULAR LOCATION</scope>
    <scope>DEVELOPMENTAL STAGE</scope>
</reference>
<gene>
    <name evidence="6 10" type="primary">cx23</name>
</gene>
<name>CXE1_DANRE</name>
<evidence type="ECO:0000250" key="1">
    <source>
        <dbReference type="UniProtKB" id="P08050"/>
    </source>
</evidence>
<evidence type="ECO:0000250" key="2">
    <source>
        <dbReference type="UniProtKB" id="P29033"/>
    </source>
</evidence>
<evidence type="ECO:0000250" key="3">
    <source>
        <dbReference type="UniProtKB" id="Q9CX92"/>
    </source>
</evidence>
<evidence type="ECO:0000255" key="4"/>
<evidence type="ECO:0000269" key="5">
    <source>
    </source>
</evidence>
<evidence type="ECO:0000303" key="6">
    <source>
    </source>
</evidence>
<evidence type="ECO:0000305" key="7"/>
<evidence type="ECO:0000312" key="8">
    <source>
        <dbReference type="EMBL" id="AAH91468.1"/>
    </source>
</evidence>
<evidence type="ECO:0000312" key="9">
    <source>
        <dbReference type="Proteomes" id="UP000000437"/>
    </source>
</evidence>
<evidence type="ECO:0000312" key="10">
    <source>
        <dbReference type="ZFIN" id="ZDB-GENE-050320-121"/>
    </source>
</evidence>
<keyword id="KW-1003">Cell membrane</keyword>
<keyword id="KW-1015">Disulfide bond</keyword>
<keyword id="KW-0472">Membrane</keyword>
<keyword id="KW-1185">Reference proteome</keyword>
<keyword id="KW-0812">Transmembrane</keyword>
<keyword id="KW-1133">Transmembrane helix</keyword>
<keyword id="KW-0813">Transport</keyword>
<sequence>MSLNYIKNFYEGCLRPPTVIGQFHTLFFGSVRTFFLGVLGFAVYGNEALHFSCDPDKRELNLYCYNQFRPITPQVFWALQLVTVLVPGAVFHLYAACKNIDQEEILHRPMSTVFYIISVLLRIILEVLAFWLQSHLFGFLVDPIFMCDVTGLGKILNVSKCMVPEHFEKTIFLSAMYTFTIITILLCIAEIFEILFRRLGYLNQPMT</sequence>
<accession>U3JA75</accession>
<comment type="function">
    <text evidence="5">Has significant hemichannel activity. However, has only low-efficiency gap junction activity and probably does not function as a gap junction channel in vivo.</text>
</comment>
<comment type="subunit">
    <text evidence="1">A connexon is composed of a hexamer of connexins.</text>
</comment>
<comment type="subcellular location">
    <subcellularLocation>
        <location evidence="5">Cell membrane</location>
        <topology evidence="4">Multi-pass membrane protein</topology>
    </subcellularLocation>
</comment>
<comment type="developmental stage">
    <text evidence="5">Expressed in lens at 24 hours post-fertilization.</text>
</comment>
<comment type="similarity">
    <text evidence="7">Belongs to the connexin family. Beta-type (group I) subfamily.</text>
</comment>
<proteinExistence type="evidence at transcript level"/>